<keyword id="KW-0067">ATP-binding</keyword>
<keyword id="KW-1003">Cell membrane</keyword>
<keyword id="KW-0472">Membrane</keyword>
<keyword id="KW-0547">Nucleotide-binding</keyword>
<keyword id="KW-0918">Phosphonate transport</keyword>
<keyword id="KW-1278">Translocase</keyword>
<keyword id="KW-0813">Transport</keyword>
<comment type="function">
    <text evidence="1">Part of the ABC transporter complex PhnCDE involved in phosphonates import. Responsible for energy coupling to the transport system.</text>
</comment>
<comment type="catalytic activity">
    <reaction evidence="1">
        <text>phosphonate(out) + ATP + H2O = phosphonate(in) + ADP + phosphate + H(+)</text>
        <dbReference type="Rhea" id="RHEA:18065"/>
        <dbReference type="ChEBI" id="CHEBI:15377"/>
        <dbReference type="ChEBI" id="CHEBI:15378"/>
        <dbReference type="ChEBI" id="CHEBI:16215"/>
        <dbReference type="ChEBI" id="CHEBI:30616"/>
        <dbReference type="ChEBI" id="CHEBI:43474"/>
        <dbReference type="ChEBI" id="CHEBI:456216"/>
        <dbReference type="EC" id="7.3.2.2"/>
    </reaction>
</comment>
<comment type="subunit">
    <text evidence="1">The complex is composed of two ATP-binding proteins (PhnC), two transmembrane proteins (PhnE) and a solute-binding protein (PhnD).</text>
</comment>
<comment type="subcellular location">
    <subcellularLocation>
        <location evidence="1">Cell membrane</location>
        <topology evidence="1">Peripheral membrane protein</topology>
    </subcellularLocation>
</comment>
<comment type="similarity">
    <text evidence="1">Belongs to the ABC transporter superfamily. Phosphonates importer (TC 3.A.1.9.1) family.</text>
</comment>
<name>PHNC_BACHK</name>
<gene>
    <name evidence="1" type="primary">phnC</name>
    <name type="ordered locus">BT9727_3440</name>
</gene>
<reference key="1">
    <citation type="journal article" date="2006" name="J. Bacteriol.">
        <title>Pathogenomic sequence analysis of Bacillus cereus and Bacillus thuringiensis isolates closely related to Bacillus anthracis.</title>
        <authorList>
            <person name="Han C.S."/>
            <person name="Xie G."/>
            <person name="Challacombe J.F."/>
            <person name="Altherr M.R."/>
            <person name="Bhotika S.S."/>
            <person name="Bruce D."/>
            <person name="Campbell C.S."/>
            <person name="Campbell M.L."/>
            <person name="Chen J."/>
            <person name="Chertkov O."/>
            <person name="Cleland C."/>
            <person name="Dimitrijevic M."/>
            <person name="Doggett N.A."/>
            <person name="Fawcett J.J."/>
            <person name="Glavina T."/>
            <person name="Goodwin L.A."/>
            <person name="Hill K.K."/>
            <person name="Hitchcock P."/>
            <person name="Jackson P.J."/>
            <person name="Keim P."/>
            <person name="Kewalramani A.R."/>
            <person name="Longmire J."/>
            <person name="Lucas S."/>
            <person name="Malfatti S."/>
            <person name="McMurry K."/>
            <person name="Meincke L.J."/>
            <person name="Misra M."/>
            <person name="Moseman B.L."/>
            <person name="Mundt M."/>
            <person name="Munk A.C."/>
            <person name="Okinaka R.T."/>
            <person name="Parson-Quintana B."/>
            <person name="Reilly L.P."/>
            <person name="Richardson P."/>
            <person name="Robinson D.L."/>
            <person name="Rubin E."/>
            <person name="Saunders E."/>
            <person name="Tapia R."/>
            <person name="Tesmer J.G."/>
            <person name="Thayer N."/>
            <person name="Thompson L.S."/>
            <person name="Tice H."/>
            <person name="Ticknor L.O."/>
            <person name="Wills P.L."/>
            <person name="Brettin T.S."/>
            <person name="Gilna P."/>
        </authorList>
    </citation>
    <scope>NUCLEOTIDE SEQUENCE [LARGE SCALE GENOMIC DNA]</scope>
    <source>
        <strain>97-27</strain>
    </source>
</reference>
<protein>
    <recommendedName>
        <fullName evidence="1">Phosphonates import ATP-binding protein PhnC</fullName>
        <ecNumber evidence="1">7.3.2.2</ecNumber>
    </recommendedName>
</protein>
<evidence type="ECO:0000255" key="1">
    <source>
        <dbReference type="HAMAP-Rule" id="MF_01713"/>
    </source>
</evidence>
<organism>
    <name type="scientific">Bacillus thuringiensis subsp. konkukian (strain 97-27)</name>
    <dbReference type="NCBI Taxonomy" id="281309"/>
    <lineage>
        <taxon>Bacteria</taxon>
        <taxon>Bacillati</taxon>
        <taxon>Bacillota</taxon>
        <taxon>Bacilli</taxon>
        <taxon>Bacillales</taxon>
        <taxon>Bacillaceae</taxon>
        <taxon>Bacillus</taxon>
        <taxon>Bacillus cereus group</taxon>
    </lineage>
</organism>
<accession>Q6HFB5</accession>
<proteinExistence type="inferred from homology"/>
<sequence length="257" mass="28493">MIEFRNVSKVYPNGTKGLNNINLKIQKGEFVVMVGLSGAGKSTLLRSVNRLHEITEGEIMIEGESITAAKGKRLRRMRRDIGMIFQSFNLVKRSTVLKNVLAGRVGYHSTLRTTLGLFPKEDLELAFQSLKRVNILEKAYARADELSGGQQQRVSIARALAQEAKIILADEPVASLDPLTTKQVLDDLKKINEDFGITTIVNLHSIDLARQYATRIIGLHAGEIVFDGLVEEATDEKFAEIYGDVAQKSELLEVAVK</sequence>
<dbReference type="EC" id="7.3.2.2" evidence="1"/>
<dbReference type="EMBL" id="AE017355">
    <property type="protein sequence ID" value="AAT63945.1"/>
    <property type="molecule type" value="Genomic_DNA"/>
</dbReference>
<dbReference type="RefSeq" id="WP_000569258.1">
    <property type="nucleotide sequence ID" value="NC_005957.1"/>
</dbReference>
<dbReference type="RefSeq" id="YP_037761.1">
    <property type="nucleotide sequence ID" value="NC_005957.1"/>
</dbReference>
<dbReference type="SMR" id="Q6HFB5"/>
<dbReference type="KEGG" id="btk:BT9727_3440"/>
<dbReference type="PATRIC" id="fig|281309.8.peg.3674"/>
<dbReference type="HOGENOM" id="CLU_000604_1_22_9"/>
<dbReference type="Proteomes" id="UP000001301">
    <property type="component" value="Chromosome"/>
</dbReference>
<dbReference type="GO" id="GO:0005886">
    <property type="term" value="C:plasma membrane"/>
    <property type="evidence" value="ECO:0007669"/>
    <property type="project" value="UniProtKB-SubCell"/>
</dbReference>
<dbReference type="GO" id="GO:0015416">
    <property type="term" value="F:ABC-type phosphonate transporter activity"/>
    <property type="evidence" value="ECO:0007669"/>
    <property type="project" value="UniProtKB-EC"/>
</dbReference>
<dbReference type="GO" id="GO:0005524">
    <property type="term" value="F:ATP binding"/>
    <property type="evidence" value="ECO:0007669"/>
    <property type="project" value="UniProtKB-KW"/>
</dbReference>
<dbReference type="GO" id="GO:0016887">
    <property type="term" value="F:ATP hydrolysis activity"/>
    <property type="evidence" value="ECO:0007669"/>
    <property type="project" value="InterPro"/>
</dbReference>
<dbReference type="CDD" id="cd03256">
    <property type="entry name" value="ABC_PhnC_transporter"/>
    <property type="match status" value="1"/>
</dbReference>
<dbReference type="FunFam" id="3.40.50.300:FF:001482">
    <property type="entry name" value="Phosphonates import ATP-binding protein PhnC"/>
    <property type="match status" value="1"/>
</dbReference>
<dbReference type="Gene3D" id="3.40.50.300">
    <property type="entry name" value="P-loop containing nucleotide triphosphate hydrolases"/>
    <property type="match status" value="1"/>
</dbReference>
<dbReference type="InterPro" id="IPR003593">
    <property type="entry name" value="AAA+_ATPase"/>
</dbReference>
<dbReference type="InterPro" id="IPR003439">
    <property type="entry name" value="ABC_transporter-like_ATP-bd"/>
</dbReference>
<dbReference type="InterPro" id="IPR017871">
    <property type="entry name" value="ABC_transporter-like_CS"/>
</dbReference>
<dbReference type="InterPro" id="IPR012693">
    <property type="entry name" value="ABC_transpr_PhnC"/>
</dbReference>
<dbReference type="InterPro" id="IPR050086">
    <property type="entry name" value="MetN_ABC_transporter-like"/>
</dbReference>
<dbReference type="InterPro" id="IPR027417">
    <property type="entry name" value="P-loop_NTPase"/>
</dbReference>
<dbReference type="NCBIfam" id="TIGR02315">
    <property type="entry name" value="ABC_phnC"/>
    <property type="match status" value="1"/>
</dbReference>
<dbReference type="PANTHER" id="PTHR43166">
    <property type="entry name" value="AMINO ACID IMPORT ATP-BINDING PROTEIN"/>
    <property type="match status" value="1"/>
</dbReference>
<dbReference type="PANTHER" id="PTHR43166:SF6">
    <property type="entry name" value="PHOSPHONATES IMPORT ATP-BINDING PROTEIN PHNC"/>
    <property type="match status" value="1"/>
</dbReference>
<dbReference type="Pfam" id="PF00005">
    <property type="entry name" value="ABC_tran"/>
    <property type="match status" value="1"/>
</dbReference>
<dbReference type="SMART" id="SM00382">
    <property type="entry name" value="AAA"/>
    <property type="match status" value="1"/>
</dbReference>
<dbReference type="SUPFAM" id="SSF52540">
    <property type="entry name" value="P-loop containing nucleoside triphosphate hydrolases"/>
    <property type="match status" value="1"/>
</dbReference>
<dbReference type="PROSITE" id="PS00211">
    <property type="entry name" value="ABC_TRANSPORTER_1"/>
    <property type="match status" value="1"/>
</dbReference>
<dbReference type="PROSITE" id="PS50893">
    <property type="entry name" value="ABC_TRANSPORTER_2"/>
    <property type="match status" value="1"/>
</dbReference>
<dbReference type="PROSITE" id="PS51249">
    <property type="entry name" value="PHNC"/>
    <property type="match status" value="1"/>
</dbReference>
<feature type="chain" id="PRO_0000092695" description="Phosphonates import ATP-binding protein PhnC">
    <location>
        <begin position="1"/>
        <end position="257"/>
    </location>
</feature>
<feature type="domain" description="ABC transporter" evidence="1">
    <location>
        <begin position="2"/>
        <end position="246"/>
    </location>
</feature>
<feature type="binding site" evidence="1">
    <location>
        <begin position="35"/>
        <end position="42"/>
    </location>
    <ligand>
        <name>ATP</name>
        <dbReference type="ChEBI" id="CHEBI:30616"/>
    </ligand>
</feature>